<feature type="chain" id="PRO_1000090954" description="Aspartate--tRNA ligase">
    <location>
        <begin position="1"/>
        <end position="591"/>
    </location>
</feature>
<feature type="region of interest" description="Aspartate" evidence="1">
    <location>
        <begin position="195"/>
        <end position="198"/>
    </location>
</feature>
<feature type="binding site" evidence="1">
    <location>
        <position position="171"/>
    </location>
    <ligand>
        <name>L-aspartate</name>
        <dbReference type="ChEBI" id="CHEBI:29991"/>
    </ligand>
</feature>
<feature type="binding site" evidence="1">
    <location>
        <begin position="217"/>
        <end position="219"/>
    </location>
    <ligand>
        <name>ATP</name>
        <dbReference type="ChEBI" id="CHEBI:30616"/>
    </ligand>
</feature>
<feature type="binding site" evidence="1">
    <location>
        <position position="217"/>
    </location>
    <ligand>
        <name>L-aspartate</name>
        <dbReference type="ChEBI" id="CHEBI:29991"/>
    </ligand>
</feature>
<feature type="binding site" evidence="1">
    <location>
        <position position="226"/>
    </location>
    <ligand>
        <name>ATP</name>
        <dbReference type="ChEBI" id="CHEBI:30616"/>
    </ligand>
</feature>
<feature type="binding site" evidence="1">
    <location>
        <position position="448"/>
    </location>
    <ligand>
        <name>L-aspartate</name>
        <dbReference type="ChEBI" id="CHEBI:29991"/>
    </ligand>
</feature>
<feature type="binding site" evidence="1">
    <location>
        <position position="482"/>
    </location>
    <ligand>
        <name>ATP</name>
        <dbReference type="ChEBI" id="CHEBI:30616"/>
    </ligand>
</feature>
<feature type="binding site" evidence="1">
    <location>
        <position position="489"/>
    </location>
    <ligand>
        <name>L-aspartate</name>
        <dbReference type="ChEBI" id="CHEBI:29991"/>
    </ligand>
</feature>
<feature type="binding site" evidence="1">
    <location>
        <begin position="534"/>
        <end position="537"/>
    </location>
    <ligand>
        <name>ATP</name>
        <dbReference type="ChEBI" id="CHEBI:30616"/>
    </ligand>
</feature>
<proteinExistence type="inferred from homology"/>
<protein>
    <recommendedName>
        <fullName evidence="1">Aspartate--tRNA ligase</fullName>
        <ecNumber evidence="1">6.1.1.12</ecNumber>
    </recommendedName>
    <alternativeName>
        <fullName evidence="1">Aspartyl-tRNA synthetase</fullName>
        <shortName evidence="1">AspRS</shortName>
    </alternativeName>
</protein>
<organism>
    <name type="scientific">Aliivibrio salmonicida (strain LFI1238)</name>
    <name type="common">Vibrio salmonicida (strain LFI1238)</name>
    <dbReference type="NCBI Taxonomy" id="316275"/>
    <lineage>
        <taxon>Bacteria</taxon>
        <taxon>Pseudomonadati</taxon>
        <taxon>Pseudomonadota</taxon>
        <taxon>Gammaproteobacteria</taxon>
        <taxon>Vibrionales</taxon>
        <taxon>Vibrionaceae</taxon>
        <taxon>Aliivibrio</taxon>
    </lineage>
</organism>
<evidence type="ECO:0000255" key="1">
    <source>
        <dbReference type="HAMAP-Rule" id="MF_00044"/>
    </source>
</evidence>
<gene>
    <name evidence="1" type="primary">aspS</name>
    <name type="ordered locus">VSAL_I1886</name>
</gene>
<accession>B6EGJ1</accession>
<reference key="1">
    <citation type="journal article" date="2008" name="BMC Genomics">
        <title>The genome sequence of the fish pathogen Aliivibrio salmonicida strain LFI1238 shows extensive evidence of gene decay.</title>
        <authorList>
            <person name="Hjerde E."/>
            <person name="Lorentzen M.S."/>
            <person name="Holden M.T."/>
            <person name="Seeger K."/>
            <person name="Paulsen S."/>
            <person name="Bason N."/>
            <person name="Churcher C."/>
            <person name="Harris D."/>
            <person name="Norbertczak H."/>
            <person name="Quail M.A."/>
            <person name="Sanders S."/>
            <person name="Thurston S."/>
            <person name="Parkhill J."/>
            <person name="Willassen N.P."/>
            <person name="Thomson N.R."/>
        </authorList>
    </citation>
    <scope>NUCLEOTIDE SEQUENCE [LARGE SCALE GENOMIC DNA]</scope>
    <source>
        <strain>LFI1238</strain>
    </source>
</reference>
<comment type="function">
    <text evidence="1">Catalyzes the attachment of L-aspartate to tRNA(Asp) in a two-step reaction: L-aspartate is first activated by ATP to form Asp-AMP and then transferred to the acceptor end of tRNA(Asp).</text>
</comment>
<comment type="catalytic activity">
    <reaction evidence="1">
        <text>tRNA(Asp) + L-aspartate + ATP = L-aspartyl-tRNA(Asp) + AMP + diphosphate</text>
        <dbReference type="Rhea" id="RHEA:19649"/>
        <dbReference type="Rhea" id="RHEA-COMP:9660"/>
        <dbReference type="Rhea" id="RHEA-COMP:9678"/>
        <dbReference type="ChEBI" id="CHEBI:29991"/>
        <dbReference type="ChEBI" id="CHEBI:30616"/>
        <dbReference type="ChEBI" id="CHEBI:33019"/>
        <dbReference type="ChEBI" id="CHEBI:78442"/>
        <dbReference type="ChEBI" id="CHEBI:78516"/>
        <dbReference type="ChEBI" id="CHEBI:456215"/>
        <dbReference type="EC" id="6.1.1.12"/>
    </reaction>
</comment>
<comment type="subunit">
    <text evidence="1">Homodimer.</text>
</comment>
<comment type="subcellular location">
    <subcellularLocation>
        <location evidence="1">Cytoplasm</location>
    </subcellularLocation>
</comment>
<comment type="similarity">
    <text evidence="1">Belongs to the class-II aminoacyl-tRNA synthetase family. Type 1 subfamily.</text>
</comment>
<dbReference type="EC" id="6.1.1.12" evidence="1"/>
<dbReference type="EMBL" id="FM178379">
    <property type="protein sequence ID" value="CAQ79571.1"/>
    <property type="molecule type" value="Genomic_DNA"/>
</dbReference>
<dbReference type="RefSeq" id="WP_012550461.1">
    <property type="nucleotide sequence ID" value="NC_011312.1"/>
</dbReference>
<dbReference type="SMR" id="B6EGJ1"/>
<dbReference type="KEGG" id="vsa:VSAL_I1886"/>
<dbReference type="eggNOG" id="COG0173">
    <property type="taxonomic scope" value="Bacteria"/>
</dbReference>
<dbReference type="HOGENOM" id="CLU_014330_3_2_6"/>
<dbReference type="Proteomes" id="UP000001730">
    <property type="component" value="Chromosome 1"/>
</dbReference>
<dbReference type="GO" id="GO:0005737">
    <property type="term" value="C:cytoplasm"/>
    <property type="evidence" value="ECO:0007669"/>
    <property type="project" value="UniProtKB-SubCell"/>
</dbReference>
<dbReference type="GO" id="GO:0004815">
    <property type="term" value="F:aspartate-tRNA ligase activity"/>
    <property type="evidence" value="ECO:0007669"/>
    <property type="project" value="UniProtKB-UniRule"/>
</dbReference>
<dbReference type="GO" id="GO:0005524">
    <property type="term" value="F:ATP binding"/>
    <property type="evidence" value="ECO:0007669"/>
    <property type="project" value="UniProtKB-UniRule"/>
</dbReference>
<dbReference type="GO" id="GO:0003676">
    <property type="term" value="F:nucleic acid binding"/>
    <property type="evidence" value="ECO:0007669"/>
    <property type="project" value="InterPro"/>
</dbReference>
<dbReference type="GO" id="GO:0006422">
    <property type="term" value="P:aspartyl-tRNA aminoacylation"/>
    <property type="evidence" value="ECO:0007669"/>
    <property type="project" value="UniProtKB-UniRule"/>
</dbReference>
<dbReference type="CDD" id="cd00777">
    <property type="entry name" value="AspRS_core"/>
    <property type="match status" value="1"/>
</dbReference>
<dbReference type="CDD" id="cd04317">
    <property type="entry name" value="EcAspRS_like_N"/>
    <property type="match status" value="1"/>
</dbReference>
<dbReference type="FunFam" id="2.40.50.140:FF:000080">
    <property type="entry name" value="Aspartate--tRNA ligase"/>
    <property type="match status" value="1"/>
</dbReference>
<dbReference type="Gene3D" id="3.30.930.10">
    <property type="entry name" value="Bira Bifunctional Protein, Domain 2"/>
    <property type="match status" value="1"/>
</dbReference>
<dbReference type="Gene3D" id="3.30.1360.30">
    <property type="entry name" value="GAD-like domain"/>
    <property type="match status" value="1"/>
</dbReference>
<dbReference type="Gene3D" id="2.40.50.140">
    <property type="entry name" value="Nucleic acid-binding proteins"/>
    <property type="match status" value="1"/>
</dbReference>
<dbReference type="HAMAP" id="MF_00044">
    <property type="entry name" value="Asp_tRNA_synth_type1"/>
    <property type="match status" value="1"/>
</dbReference>
<dbReference type="InterPro" id="IPR004364">
    <property type="entry name" value="Aa-tRNA-synt_II"/>
</dbReference>
<dbReference type="InterPro" id="IPR006195">
    <property type="entry name" value="aa-tRNA-synth_II"/>
</dbReference>
<dbReference type="InterPro" id="IPR045864">
    <property type="entry name" value="aa-tRNA-synth_II/BPL/LPL"/>
</dbReference>
<dbReference type="InterPro" id="IPR004524">
    <property type="entry name" value="Asp-tRNA-ligase_1"/>
</dbReference>
<dbReference type="InterPro" id="IPR047089">
    <property type="entry name" value="Asp-tRNA-ligase_1_N"/>
</dbReference>
<dbReference type="InterPro" id="IPR002312">
    <property type="entry name" value="Asp/Asn-tRNA-synth_IIb"/>
</dbReference>
<dbReference type="InterPro" id="IPR047090">
    <property type="entry name" value="AspRS_core"/>
</dbReference>
<dbReference type="InterPro" id="IPR004115">
    <property type="entry name" value="GAD-like_sf"/>
</dbReference>
<dbReference type="InterPro" id="IPR029351">
    <property type="entry name" value="GAD_dom"/>
</dbReference>
<dbReference type="InterPro" id="IPR012340">
    <property type="entry name" value="NA-bd_OB-fold"/>
</dbReference>
<dbReference type="InterPro" id="IPR004365">
    <property type="entry name" value="NA-bd_OB_tRNA"/>
</dbReference>
<dbReference type="NCBIfam" id="TIGR00459">
    <property type="entry name" value="aspS_bact"/>
    <property type="match status" value="1"/>
</dbReference>
<dbReference type="NCBIfam" id="NF001750">
    <property type="entry name" value="PRK00476.1"/>
    <property type="match status" value="1"/>
</dbReference>
<dbReference type="PANTHER" id="PTHR22594:SF5">
    <property type="entry name" value="ASPARTATE--TRNA LIGASE, MITOCHONDRIAL"/>
    <property type="match status" value="1"/>
</dbReference>
<dbReference type="PANTHER" id="PTHR22594">
    <property type="entry name" value="ASPARTYL/LYSYL-TRNA SYNTHETASE"/>
    <property type="match status" value="1"/>
</dbReference>
<dbReference type="Pfam" id="PF02938">
    <property type="entry name" value="GAD"/>
    <property type="match status" value="1"/>
</dbReference>
<dbReference type="Pfam" id="PF00152">
    <property type="entry name" value="tRNA-synt_2"/>
    <property type="match status" value="1"/>
</dbReference>
<dbReference type="Pfam" id="PF01336">
    <property type="entry name" value="tRNA_anti-codon"/>
    <property type="match status" value="1"/>
</dbReference>
<dbReference type="PRINTS" id="PR01042">
    <property type="entry name" value="TRNASYNTHASP"/>
</dbReference>
<dbReference type="SUPFAM" id="SSF55681">
    <property type="entry name" value="Class II aaRS and biotin synthetases"/>
    <property type="match status" value="1"/>
</dbReference>
<dbReference type="SUPFAM" id="SSF55261">
    <property type="entry name" value="GAD domain-like"/>
    <property type="match status" value="1"/>
</dbReference>
<dbReference type="SUPFAM" id="SSF50249">
    <property type="entry name" value="Nucleic acid-binding proteins"/>
    <property type="match status" value="1"/>
</dbReference>
<dbReference type="PROSITE" id="PS50862">
    <property type="entry name" value="AA_TRNA_LIGASE_II"/>
    <property type="match status" value="1"/>
</dbReference>
<sequence>MRSHYCGNLNKSLAGQTVELCGWVNRRRDLGGLIFIDMRDREGVVQVVVDPDMKDIFSTANQLRNEFCIKFTGEVRVRPDSQVNKDMSTGEVELYATGLEIINRSEALPLDFNQTNSEEQRLKYRYIDLRRPEMSDRIKLRARASSFVRRFLDENLFLDIETPVLTKATPEGARDYLVPSRVHKGSFYALPQSPQLFKQLLMMSGFDRYYQIVKCFRDEDLRADRQPEFTQIDIETSFLSSNQVRDITERLVHDMWKELLDVELGQFPIMKFSEAIRRFGSDKPDLRNPLELVDIADLLKDVEFQVFAGPANDEKGRVAVIRVPGGASLSRKQIDEYGKFVGIYGAKGLAWMKVNDRAAGLEGVQSPVAKFLNADVVNGILERTEAESGDIILFGADKANIVSEAMGALRIKLGDDLELTDKKAWAPLWVIDFPMFEEDGEGNLHAMHHPFTSPLGMTAEELKVNPAAANSDAYDMVINGYEVGGGSVRIHNAEMQTAVFGILGIEAKEQQEKFGFLLEALKYGTPPHAGLAFGLDRLAMLLCGTENIRDVIAFPKTTAAACLLTNAPSPANPDSLAELAIAVKFAEKKDA</sequence>
<name>SYD_ALISL</name>
<keyword id="KW-0030">Aminoacyl-tRNA synthetase</keyword>
<keyword id="KW-0067">ATP-binding</keyword>
<keyword id="KW-0963">Cytoplasm</keyword>
<keyword id="KW-0436">Ligase</keyword>
<keyword id="KW-0547">Nucleotide-binding</keyword>
<keyword id="KW-0648">Protein biosynthesis</keyword>